<dbReference type="EC" id="2.7.4.25" evidence="1"/>
<dbReference type="EMBL" id="CP000653">
    <property type="protein sequence ID" value="ABP60109.1"/>
    <property type="molecule type" value="Genomic_DNA"/>
</dbReference>
<dbReference type="RefSeq" id="WP_012016826.1">
    <property type="nucleotide sequence ID" value="NC_009436.1"/>
</dbReference>
<dbReference type="SMR" id="A4W8S9"/>
<dbReference type="STRING" id="399742.Ent638_1429"/>
<dbReference type="GeneID" id="93308522"/>
<dbReference type="KEGG" id="ent:Ent638_1429"/>
<dbReference type="eggNOG" id="COG0283">
    <property type="taxonomic scope" value="Bacteria"/>
</dbReference>
<dbReference type="HOGENOM" id="CLU_079959_0_2_6"/>
<dbReference type="OrthoDB" id="9807434at2"/>
<dbReference type="Proteomes" id="UP000000230">
    <property type="component" value="Chromosome"/>
</dbReference>
<dbReference type="GO" id="GO:0005829">
    <property type="term" value="C:cytosol"/>
    <property type="evidence" value="ECO:0007669"/>
    <property type="project" value="TreeGrafter"/>
</dbReference>
<dbReference type="GO" id="GO:0005524">
    <property type="term" value="F:ATP binding"/>
    <property type="evidence" value="ECO:0007669"/>
    <property type="project" value="UniProtKB-UniRule"/>
</dbReference>
<dbReference type="GO" id="GO:0036430">
    <property type="term" value="F:CMP kinase activity"/>
    <property type="evidence" value="ECO:0007669"/>
    <property type="project" value="RHEA"/>
</dbReference>
<dbReference type="GO" id="GO:0036431">
    <property type="term" value="F:dCMP kinase activity"/>
    <property type="evidence" value="ECO:0007669"/>
    <property type="project" value="RHEA"/>
</dbReference>
<dbReference type="GO" id="GO:0015949">
    <property type="term" value="P:nucleobase-containing small molecule interconversion"/>
    <property type="evidence" value="ECO:0007669"/>
    <property type="project" value="TreeGrafter"/>
</dbReference>
<dbReference type="GO" id="GO:0006220">
    <property type="term" value="P:pyrimidine nucleotide metabolic process"/>
    <property type="evidence" value="ECO:0007669"/>
    <property type="project" value="UniProtKB-UniRule"/>
</dbReference>
<dbReference type="CDD" id="cd02020">
    <property type="entry name" value="CMPK"/>
    <property type="match status" value="1"/>
</dbReference>
<dbReference type="FunFam" id="3.40.50.300:FF:000262">
    <property type="entry name" value="Cytidylate kinase"/>
    <property type="match status" value="1"/>
</dbReference>
<dbReference type="Gene3D" id="3.40.50.300">
    <property type="entry name" value="P-loop containing nucleotide triphosphate hydrolases"/>
    <property type="match status" value="1"/>
</dbReference>
<dbReference type="HAMAP" id="MF_00238">
    <property type="entry name" value="Cytidyl_kinase_type1"/>
    <property type="match status" value="1"/>
</dbReference>
<dbReference type="InterPro" id="IPR003136">
    <property type="entry name" value="Cytidylate_kin"/>
</dbReference>
<dbReference type="InterPro" id="IPR011994">
    <property type="entry name" value="Cytidylate_kinase_dom"/>
</dbReference>
<dbReference type="InterPro" id="IPR027417">
    <property type="entry name" value="P-loop_NTPase"/>
</dbReference>
<dbReference type="NCBIfam" id="TIGR00017">
    <property type="entry name" value="cmk"/>
    <property type="match status" value="1"/>
</dbReference>
<dbReference type="PANTHER" id="PTHR21299:SF2">
    <property type="entry name" value="CYTIDYLATE KINASE"/>
    <property type="match status" value="1"/>
</dbReference>
<dbReference type="PANTHER" id="PTHR21299">
    <property type="entry name" value="CYTIDYLATE KINASE/PANTOATE-BETA-ALANINE LIGASE"/>
    <property type="match status" value="1"/>
</dbReference>
<dbReference type="Pfam" id="PF02224">
    <property type="entry name" value="Cytidylate_kin"/>
    <property type="match status" value="1"/>
</dbReference>
<dbReference type="SUPFAM" id="SSF52540">
    <property type="entry name" value="P-loop containing nucleoside triphosphate hydrolases"/>
    <property type="match status" value="1"/>
</dbReference>
<comment type="catalytic activity">
    <reaction evidence="1">
        <text>CMP + ATP = CDP + ADP</text>
        <dbReference type="Rhea" id="RHEA:11600"/>
        <dbReference type="ChEBI" id="CHEBI:30616"/>
        <dbReference type="ChEBI" id="CHEBI:58069"/>
        <dbReference type="ChEBI" id="CHEBI:60377"/>
        <dbReference type="ChEBI" id="CHEBI:456216"/>
        <dbReference type="EC" id="2.7.4.25"/>
    </reaction>
</comment>
<comment type="catalytic activity">
    <reaction evidence="1">
        <text>dCMP + ATP = dCDP + ADP</text>
        <dbReference type="Rhea" id="RHEA:25094"/>
        <dbReference type="ChEBI" id="CHEBI:30616"/>
        <dbReference type="ChEBI" id="CHEBI:57566"/>
        <dbReference type="ChEBI" id="CHEBI:58593"/>
        <dbReference type="ChEBI" id="CHEBI:456216"/>
        <dbReference type="EC" id="2.7.4.25"/>
    </reaction>
</comment>
<comment type="subcellular location">
    <subcellularLocation>
        <location evidence="1">Cytoplasm</location>
    </subcellularLocation>
</comment>
<comment type="similarity">
    <text evidence="1">Belongs to the cytidylate kinase family. Type 1 subfamily.</text>
</comment>
<name>KCY_ENT38</name>
<sequence>MTAAAPVITIDGPSGAGKGTLCKAMAEALQWHLLDSGAIYRVLALAALHHHVDVASEEALVPLAAHLDVRFISTHGNLEVILEGEDVSGEIRTQEVANAASQVAAFPRVREALLRRQRAFREAPGLIADGRDMGTVVFPDAPVKIFLDASSEERAQRRMLQLQEKGFSVNFDRLLSEIKERDDRDRNRAVAPLVPAEDALVLDSTSLTIEQVIEKALQYARQKLALA</sequence>
<proteinExistence type="inferred from homology"/>
<evidence type="ECO:0000255" key="1">
    <source>
        <dbReference type="HAMAP-Rule" id="MF_00238"/>
    </source>
</evidence>
<feature type="chain" id="PRO_1000058978" description="Cytidylate kinase">
    <location>
        <begin position="1"/>
        <end position="227"/>
    </location>
</feature>
<feature type="binding site" evidence="1">
    <location>
        <begin position="12"/>
        <end position="20"/>
    </location>
    <ligand>
        <name>ATP</name>
        <dbReference type="ChEBI" id="CHEBI:30616"/>
    </ligand>
</feature>
<protein>
    <recommendedName>
        <fullName evidence="1">Cytidylate kinase</fullName>
        <shortName evidence="1">CK</shortName>
        <ecNumber evidence="1">2.7.4.25</ecNumber>
    </recommendedName>
    <alternativeName>
        <fullName evidence="1">Cytidine monophosphate kinase</fullName>
        <shortName evidence="1">CMP kinase</shortName>
    </alternativeName>
</protein>
<organism>
    <name type="scientific">Enterobacter sp. (strain 638)</name>
    <dbReference type="NCBI Taxonomy" id="399742"/>
    <lineage>
        <taxon>Bacteria</taxon>
        <taxon>Pseudomonadati</taxon>
        <taxon>Pseudomonadota</taxon>
        <taxon>Gammaproteobacteria</taxon>
        <taxon>Enterobacterales</taxon>
        <taxon>Enterobacteriaceae</taxon>
        <taxon>Enterobacter</taxon>
    </lineage>
</organism>
<gene>
    <name evidence="1" type="primary">cmk</name>
    <name type="ordered locus">Ent638_1429</name>
</gene>
<accession>A4W8S9</accession>
<reference key="1">
    <citation type="journal article" date="2010" name="PLoS Genet.">
        <title>Genome sequence of the plant growth promoting endophytic bacterium Enterobacter sp. 638.</title>
        <authorList>
            <person name="Taghavi S."/>
            <person name="van der Lelie D."/>
            <person name="Hoffman A."/>
            <person name="Zhang Y.B."/>
            <person name="Walla M.D."/>
            <person name="Vangronsveld J."/>
            <person name="Newman L."/>
            <person name="Monchy S."/>
        </authorList>
    </citation>
    <scope>NUCLEOTIDE SEQUENCE [LARGE SCALE GENOMIC DNA]</scope>
    <source>
        <strain>638</strain>
    </source>
</reference>
<keyword id="KW-0067">ATP-binding</keyword>
<keyword id="KW-0963">Cytoplasm</keyword>
<keyword id="KW-0418">Kinase</keyword>
<keyword id="KW-0547">Nucleotide-binding</keyword>
<keyword id="KW-0808">Transferase</keyword>